<proteinExistence type="evidence at transcript level"/>
<feature type="initiator methionine" description="Removed" evidence="2">
    <location>
        <position position="1"/>
    </location>
</feature>
<feature type="chain" id="PRO_0000312645" description="COP9 signalosome complex subunit 3">
    <location>
        <begin position="2"/>
        <end position="423"/>
    </location>
</feature>
<feature type="domain" description="PCI" evidence="3">
    <location>
        <begin position="197"/>
        <end position="365"/>
    </location>
</feature>
<feature type="region of interest" description="Disordered" evidence="4">
    <location>
        <begin position="402"/>
        <end position="423"/>
    </location>
</feature>
<feature type="modified residue" description="N-acetylalanine" evidence="2">
    <location>
        <position position="2"/>
    </location>
</feature>
<feature type="modified residue" description="Phosphoserine" evidence="1">
    <location>
        <position position="407"/>
    </location>
</feature>
<feature type="modified residue" description="Phosphoserine" evidence="2">
    <location>
        <position position="410"/>
    </location>
</feature>
<feature type="modified residue" description="Phosphoserine" evidence="2">
    <location>
        <position position="423"/>
    </location>
</feature>
<gene>
    <name type="primary">COPS3</name>
    <name type="synonym">CSN3</name>
    <name type="ORF">QtsA-13043</name>
</gene>
<evidence type="ECO:0000250" key="1">
    <source>
        <dbReference type="UniProtKB" id="O88543"/>
    </source>
</evidence>
<evidence type="ECO:0000250" key="2">
    <source>
        <dbReference type="UniProtKB" id="Q9UNS2"/>
    </source>
</evidence>
<evidence type="ECO:0000255" key="3">
    <source>
        <dbReference type="PROSITE-ProRule" id="PRU01185"/>
    </source>
</evidence>
<evidence type="ECO:0000256" key="4">
    <source>
        <dbReference type="SAM" id="MobiDB-lite"/>
    </source>
</evidence>
<evidence type="ECO:0000305" key="5"/>
<dbReference type="EMBL" id="AB168559">
    <property type="protein sequence ID" value="BAE00674.1"/>
    <property type="molecule type" value="mRNA"/>
</dbReference>
<dbReference type="RefSeq" id="NP_001271739.1">
    <property type="nucleotide sequence ID" value="NM_001284810.1"/>
</dbReference>
<dbReference type="RefSeq" id="XP_045231220.1">
    <property type="nucleotide sequence ID" value="XM_045375285.2"/>
</dbReference>
<dbReference type="SMR" id="Q4R898"/>
<dbReference type="STRING" id="9541.ENSMFAP00000008660"/>
<dbReference type="Ensembl" id="ENSMFAT00000101464.1">
    <property type="protein sequence ID" value="ENSMFAP00000050032.1"/>
    <property type="gene ID" value="ENSMFAG00000001157.2"/>
</dbReference>
<dbReference type="GeneID" id="101925301"/>
<dbReference type="VEuPathDB" id="HostDB:ENSMFAG00000001157"/>
<dbReference type="eggNOG" id="KOG2582">
    <property type="taxonomic scope" value="Eukaryota"/>
</dbReference>
<dbReference type="GeneTree" id="ENSGT00940000153653"/>
<dbReference type="OMA" id="NHYHDLV"/>
<dbReference type="Proteomes" id="UP000233100">
    <property type="component" value="Chromosome 16"/>
</dbReference>
<dbReference type="Bgee" id="ENSMFAG00000001157">
    <property type="expression patterns" value="Expressed in skeletal muscle tissue and 13 other cell types or tissues"/>
</dbReference>
<dbReference type="GO" id="GO:0008180">
    <property type="term" value="C:COP9 signalosome"/>
    <property type="evidence" value="ECO:0007669"/>
    <property type="project" value="UniProtKB-KW"/>
</dbReference>
<dbReference type="GO" id="GO:0005737">
    <property type="term" value="C:cytoplasm"/>
    <property type="evidence" value="ECO:0007669"/>
    <property type="project" value="UniProtKB-SubCell"/>
</dbReference>
<dbReference type="GO" id="GO:0006511">
    <property type="term" value="P:ubiquitin-dependent protein catabolic process"/>
    <property type="evidence" value="ECO:0007669"/>
    <property type="project" value="TreeGrafter"/>
</dbReference>
<dbReference type="FunFam" id="1.10.10.10:FF:000354">
    <property type="entry name" value="COP9 signalosome complex subunit 3"/>
    <property type="match status" value="1"/>
</dbReference>
<dbReference type="FunFam" id="1.25.40.570:FF:000008">
    <property type="entry name" value="COP9 signalosome complex subunit 3"/>
    <property type="match status" value="1"/>
</dbReference>
<dbReference type="Gene3D" id="1.25.40.570">
    <property type="match status" value="1"/>
</dbReference>
<dbReference type="InterPro" id="IPR055089">
    <property type="entry name" value="COP9_N"/>
</dbReference>
<dbReference type="InterPro" id="IPR050756">
    <property type="entry name" value="CSN3"/>
</dbReference>
<dbReference type="InterPro" id="IPR048621">
    <property type="entry name" value="CSN3_C"/>
</dbReference>
<dbReference type="InterPro" id="IPR000717">
    <property type="entry name" value="PCI_dom"/>
</dbReference>
<dbReference type="InterPro" id="IPR036390">
    <property type="entry name" value="WH_DNA-bd_sf"/>
</dbReference>
<dbReference type="PANTHER" id="PTHR10758">
    <property type="entry name" value="26S PROTEASOME NON-ATPASE REGULATORY SUBUNIT 3/COP9 SIGNALOSOME COMPLEX SUBUNIT 3"/>
    <property type="match status" value="1"/>
</dbReference>
<dbReference type="PANTHER" id="PTHR10758:SF1">
    <property type="entry name" value="COP9 SIGNALOSOME COMPLEX SUBUNIT 3"/>
    <property type="match status" value="1"/>
</dbReference>
<dbReference type="Pfam" id="PF22788">
    <property type="entry name" value="COP9_hel_rpt"/>
    <property type="match status" value="1"/>
</dbReference>
<dbReference type="Pfam" id="PF21215">
    <property type="entry name" value="CSN3-like_C"/>
    <property type="match status" value="1"/>
</dbReference>
<dbReference type="Pfam" id="PF01399">
    <property type="entry name" value="PCI"/>
    <property type="match status" value="1"/>
</dbReference>
<dbReference type="SMART" id="SM00088">
    <property type="entry name" value="PINT"/>
    <property type="match status" value="1"/>
</dbReference>
<dbReference type="SUPFAM" id="SSF46785">
    <property type="entry name" value="Winged helix' DNA-binding domain"/>
    <property type="match status" value="1"/>
</dbReference>
<dbReference type="PROSITE" id="PS50250">
    <property type="entry name" value="PCI"/>
    <property type="match status" value="1"/>
</dbReference>
<keyword id="KW-0007">Acetylation</keyword>
<keyword id="KW-0963">Cytoplasm</keyword>
<keyword id="KW-0539">Nucleus</keyword>
<keyword id="KW-0597">Phosphoprotein</keyword>
<keyword id="KW-1185">Reference proteome</keyword>
<keyword id="KW-0736">Signalosome</keyword>
<organism>
    <name type="scientific">Macaca fascicularis</name>
    <name type="common">Crab-eating macaque</name>
    <name type="synonym">Cynomolgus monkey</name>
    <dbReference type="NCBI Taxonomy" id="9541"/>
    <lineage>
        <taxon>Eukaryota</taxon>
        <taxon>Metazoa</taxon>
        <taxon>Chordata</taxon>
        <taxon>Craniata</taxon>
        <taxon>Vertebrata</taxon>
        <taxon>Euteleostomi</taxon>
        <taxon>Mammalia</taxon>
        <taxon>Eutheria</taxon>
        <taxon>Euarchontoglires</taxon>
        <taxon>Primates</taxon>
        <taxon>Haplorrhini</taxon>
        <taxon>Catarrhini</taxon>
        <taxon>Cercopithecidae</taxon>
        <taxon>Cercopithecinae</taxon>
        <taxon>Macaca</taxon>
    </lineage>
</organism>
<protein>
    <recommendedName>
        <fullName>COP9 signalosome complex subunit 3</fullName>
        <shortName>SGN3</shortName>
        <shortName>Signalosome subunit 3</shortName>
    </recommendedName>
</protein>
<reference key="1">
    <citation type="submission" date="2005-06" db="EMBL/GenBank/DDBJ databases">
        <title>DNA sequences of macaque genes expressed in brain or testis and its evolutionary implications.</title>
        <authorList>
            <consortium name="International consortium for macaque cDNA sequencing and analysis"/>
        </authorList>
    </citation>
    <scope>NUCLEOTIDE SEQUENCE [LARGE SCALE MRNA]</scope>
    <source>
        <tissue>Testis</tissue>
    </source>
</reference>
<name>CSN3_MACFA</name>
<comment type="function">
    <text evidence="1 2">Component of the COP9 signalosome complex (CSN), a complex involved in various cellular and developmental processes (By similarity). The CSN complex is an essential regulator of the ubiquitin (Ubl) conjugation pathway by mediating the deneddylation of the cullin subunits of SCF-type E3 ligase complexes, leading to decrease the Ubl ligase activity of SCF-type complexes such as SCF, CSA or DDB2 (By similarity). The complex is also involved in phosphorylation of p53/TP53, c-jun/JUN, IkappaBalpha/NFKBIA, ITPK1 and IRF8/ICSBP, possibly via its association with CK2 and PKD kinases (By similarity). CSN-dependent phosphorylation of TP53 and JUN promotes and protects degradation by the Ubl system, respectively (By similarity). Essential to maintain the survival of epiblast cells and thus the development of the postimplantation embryo (By similarity).</text>
</comment>
<comment type="subunit">
    <text evidence="2">Component of the CSN complex, composed of COPS1/GPS1, COPS2, COPS3, COPS4, COPS5, COPS6, COPS7 (COPS7A or COPS7B), COPS8 and COPS9 (By similarity). In the complex, it probably interacts directly with COPS1, COPS4, COPS8 and COPS9 (By similarity). Interacts with CK2 and PKD (By similarity). Interacts with the translation initiation factor EIF3S6 and IKBKG (By similarity). Interacts with ERCC6 (By similarity).</text>
</comment>
<comment type="subcellular location">
    <subcellularLocation>
        <location evidence="2">Cytoplasm</location>
    </subcellularLocation>
    <subcellularLocation>
        <location evidence="2">Nucleus</location>
    </subcellularLocation>
</comment>
<comment type="similarity">
    <text evidence="5">Belongs to the CSN3 family.</text>
</comment>
<sequence length="423" mass="47873">MASALEQFVNSVRQLSAQGQMTQLCELINKSGELLAKNLSHLDTVLGALDVQEHSLGVLAVLFVKFSMPSVPDFETLFSQVQLFISTCNGEHIRYATDTFAGLCHQLTNALVERKQPLRGIGILKQAIDKMQMNTNQLTSIHADLCQLCLLAKCFKPALPYLDVDMMDICKENGAYDAKHFLCYYYYGGMIYTGLKNFERALYFYEQAITTPAMAVSHIMLESYKKYILVSLILLGKVQQLPKYTSQIVGRFIKPLSNAYHELAQVYSTNNPSELRNLVNKHSETFTRDNNMGLVKQCLSSLYKKNIQRLTKTFLTLSLQDMASRVQLSGPQEAEKYVLHMIEDGEIFASINQKDGMVSFHDNPEKYNNPAMLHNIDQEMLKCIELDERLKAMDQEITVNPQFVQKSMGSQEDDSGNKPSSYS</sequence>
<accession>Q4R898</accession>